<proteinExistence type="evidence at protein level"/>
<sequence>MAVATAAAVLAALGGALWLAARRFVGPRVQRLRRGGDPGLMHGKTVLITGANSGLGRATAAELLRLGARVIMGCRDRARAEEAAGQLRRELRQAAECGPEPGVSGVGELIVRELDLASLRSVRAFCQEMLQEEPRLDVLINNAGIFQCPYMKTEDGFEMQFGVNHLGHFLLTNLLLGLLKSSAPSRIVVVSSKLYKYGDINFDDLNSEQSYNKSFCYSRSKLANILFTRELARRLEGTNVTVNVLHPGIVRTNLGRHIHIPLLVKPLFNLVSWAFFKTPVEGAQTSIYLASSPEVEGVSGRYFGDCKEEELLPKAMDESVARKLWDISEVMVGLLK</sequence>
<organism>
    <name type="scientific">Homo sapiens</name>
    <name type="common">Human</name>
    <dbReference type="NCBI Taxonomy" id="9606"/>
    <lineage>
        <taxon>Eukaryota</taxon>
        <taxon>Metazoa</taxon>
        <taxon>Chordata</taxon>
        <taxon>Craniata</taxon>
        <taxon>Vertebrata</taxon>
        <taxon>Euteleostomi</taxon>
        <taxon>Mammalia</taxon>
        <taxon>Eutheria</taxon>
        <taxon>Euarchontoglires</taxon>
        <taxon>Primates</taxon>
        <taxon>Haplorrhini</taxon>
        <taxon>Catarrhini</taxon>
        <taxon>Hominidae</taxon>
        <taxon>Homo</taxon>
    </lineage>
</organism>
<gene>
    <name type="primary">RDH14</name>
    <name type="synonym">PAN2</name>
    <name type="synonym">SDR7C4</name>
    <name type="ORF">UNQ529/PRO1072</name>
</gene>
<dbReference type="EC" id="1.1.1.300" evidence="4"/>
<dbReference type="EMBL" id="AF237952">
    <property type="protein sequence ID" value="AAG12190.1"/>
    <property type="molecule type" value="mRNA"/>
</dbReference>
<dbReference type="EMBL" id="AY358511">
    <property type="protein sequence ID" value="AAQ88875.1"/>
    <property type="molecule type" value="mRNA"/>
</dbReference>
<dbReference type="EMBL" id="BC009830">
    <property type="protein sequence ID" value="AAH09830.1"/>
    <property type="molecule type" value="mRNA"/>
</dbReference>
<dbReference type="CCDS" id="CCDS1693.1"/>
<dbReference type="RefSeq" id="NP_065956.1">
    <property type="nucleotide sequence ID" value="NM_020905.4"/>
</dbReference>
<dbReference type="SMR" id="Q9HBH5"/>
<dbReference type="BioGRID" id="121698">
    <property type="interactions" value="45"/>
</dbReference>
<dbReference type="FunCoup" id="Q9HBH5">
    <property type="interactions" value="1627"/>
</dbReference>
<dbReference type="IntAct" id="Q9HBH5">
    <property type="interactions" value="31"/>
</dbReference>
<dbReference type="MINT" id="Q9HBH5"/>
<dbReference type="STRING" id="9606.ENSP00000370648"/>
<dbReference type="DrugBank" id="DB00162">
    <property type="generic name" value="Vitamin A"/>
</dbReference>
<dbReference type="SwissLipids" id="SLP:000001788"/>
<dbReference type="GlyGen" id="Q9HBH5">
    <property type="glycosylation" value="2 sites, 1 N-linked glycan (1 site), 1 O-linked glycan (1 site)"/>
</dbReference>
<dbReference type="iPTMnet" id="Q9HBH5"/>
<dbReference type="PhosphoSitePlus" id="Q9HBH5"/>
<dbReference type="SwissPalm" id="Q9HBH5"/>
<dbReference type="BioMuta" id="RDH14"/>
<dbReference type="DMDM" id="34395826"/>
<dbReference type="jPOST" id="Q9HBH5"/>
<dbReference type="MassIVE" id="Q9HBH5"/>
<dbReference type="PaxDb" id="9606-ENSP00000370648"/>
<dbReference type="PeptideAtlas" id="Q9HBH5"/>
<dbReference type="ProteomicsDB" id="81552"/>
<dbReference type="Pumba" id="Q9HBH5"/>
<dbReference type="Antibodypedia" id="47311">
    <property type="antibodies" value="115 antibodies from 17 providers"/>
</dbReference>
<dbReference type="DNASU" id="57665"/>
<dbReference type="Ensembl" id="ENST00000381249.4">
    <property type="protein sequence ID" value="ENSP00000370648.3"/>
    <property type="gene ID" value="ENSG00000240857.2"/>
</dbReference>
<dbReference type="GeneID" id="57665"/>
<dbReference type="KEGG" id="hsa:57665"/>
<dbReference type="MANE-Select" id="ENST00000381249.4">
    <property type="protein sequence ID" value="ENSP00000370648.3"/>
    <property type="RefSeq nucleotide sequence ID" value="NM_020905.4"/>
    <property type="RefSeq protein sequence ID" value="NP_065956.1"/>
</dbReference>
<dbReference type="UCSC" id="uc002rcx.5">
    <property type="organism name" value="human"/>
</dbReference>
<dbReference type="AGR" id="HGNC:19979"/>
<dbReference type="CTD" id="57665"/>
<dbReference type="DisGeNET" id="57665"/>
<dbReference type="GeneCards" id="RDH14"/>
<dbReference type="HGNC" id="HGNC:19979">
    <property type="gene designation" value="RDH14"/>
</dbReference>
<dbReference type="HPA" id="ENSG00000240857">
    <property type="expression patterns" value="Low tissue specificity"/>
</dbReference>
<dbReference type="neXtProt" id="NX_Q9HBH5"/>
<dbReference type="OpenTargets" id="ENSG00000240857"/>
<dbReference type="PharmGKB" id="PA134872714"/>
<dbReference type="VEuPathDB" id="HostDB:ENSG00000240857"/>
<dbReference type="eggNOG" id="KOG1208">
    <property type="taxonomic scope" value="Eukaryota"/>
</dbReference>
<dbReference type="GeneTree" id="ENSGT00940000160181"/>
<dbReference type="HOGENOM" id="CLU_010194_44_5_1"/>
<dbReference type="InParanoid" id="Q9HBH5"/>
<dbReference type="OMA" id="NTTWCAT"/>
<dbReference type="OrthoDB" id="191139at2759"/>
<dbReference type="PAN-GO" id="Q9HBH5">
    <property type="GO annotations" value="0 GO annotations based on evolutionary models"/>
</dbReference>
<dbReference type="PhylomeDB" id="Q9HBH5"/>
<dbReference type="TreeFam" id="TF105429"/>
<dbReference type="BRENDA" id="1.1.1.300">
    <property type="organism ID" value="2681"/>
</dbReference>
<dbReference type="BRENDA" id="1.1.1.71">
    <property type="organism ID" value="2681"/>
</dbReference>
<dbReference type="PathwayCommons" id="Q9HBH5"/>
<dbReference type="Reactome" id="R-HSA-5365859">
    <property type="pathway name" value="RA biosynthesis pathway"/>
</dbReference>
<dbReference type="SignaLink" id="Q9HBH5"/>
<dbReference type="UniPathway" id="UPA00912"/>
<dbReference type="BioGRID-ORCS" id="57665">
    <property type="hits" value="6 hits in 1165 CRISPR screens"/>
</dbReference>
<dbReference type="GeneWiki" id="RDH14"/>
<dbReference type="GenomeRNAi" id="57665"/>
<dbReference type="Pharos" id="Q9HBH5">
    <property type="development level" value="Tdark"/>
</dbReference>
<dbReference type="PRO" id="PR:Q9HBH5"/>
<dbReference type="Proteomes" id="UP000005640">
    <property type="component" value="Chromosome 2"/>
</dbReference>
<dbReference type="RNAct" id="Q9HBH5">
    <property type="molecule type" value="protein"/>
</dbReference>
<dbReference type="Bgee" id="ENSG00000240857">
    <property type="expression patterns" value="Expressed in heart left ventricle and 100 other cell types or tissues"/>
</dbReference>
<dbReference type="ExpressionAtlas" id="Q9HBH5">
    <property type="expression patterns" value="baseline and differential"/>
</dbReference>
<dbReference type="GO" id="GO:0005829">
    <property type="term" value="C:cytosol"/>
    <property type="evidence" value="ECO:0000314"/>
    <property type="project" value="HPA"/>
</dbReference>
<dbReference type="GO" id="GO:0005783">
    <property type="term" value="C:endoplasmic reticulum"/>
    <property type="evidence" value="ECO:0000314"/>
    <property type="project" value="LIFEdb"/>
</dbReference>
<dbReference type="GO" id="GO:0005789">
    <property type="term" value="C:endoplasmic reticulum membrane"/>
    <property type="evidence" value="ECO:0000304"/>
    <property type="project" value="Reactome"/>
</dbReference>
<dbReference type="GO" id="GO:0005765">
    <property type="term" value="C:lysosomal membrane"/>
    <property type="evidence" value="ECO:0007005"/>
    <property type="project" value="UniProtKB"/>
</dbReference>
<dbReference type="GO" id="GO:0016020">
    <property type="term" value="C:membrane"/>
    <property type="evidence" value="ECO:0007005"/>
    <property type="project" value="UniProtKB"/>
</dbReference>
<dbReference type="GO" id="GO:0005654">
    <property type="term" value="C:nucleoplasm"/>
    <property type="evidence" value="ECO:0000314"/>
    <property type="project" value="HPA"/>
</dbReference>
<dbReference type="GO" id="GO:0005634">
    <property type="term" value="C:nucleus"/>
    <property type="evidence" value="ECO:0007005"/>
    <property type="project" value="UniProtKB"/>
</dbReference>
<dbReference type="GO" id="GO:0102354">
    <property type="term" value="F:11-cis-retinol dehydrogenase activity"/>
    <property type="evidence" value="ECO:0007669"/>
    <property type="project" value="RHEA"/>
</dbReference>
<dbReference type="GO" id="GO:0052650">
    <property type="term" value="F:all-trans-retinol dehydrogenase (NADP+) activity"/>
    <property type="evidence" value="ECO:0000314"/>
    <property type="project" value="UniProtKB"/>
</dbReference>
<dbReference type="GO" id="GO:0001649">
    <property type="term" value="P:osteoblast differentiation"/>
    <property type="evidence" value="ECO:0007005"/>
    <property type="project" value="UniProtKB"/>
</dbReference>
<dbReference type="CDD" id="cd09807">
    <property type="entry name" value="retinol-DH_like_SDR_c"/>
    <property type="match status" value="1"/>
</dbReference>
<dbReference type="FunFam" id="3.40.50.720:FF:000331">
    <property type="entry name" value="Retinol dehydrogenase 14 (All-trans/9-cis/11-cis)"/>
    <property type="match status" value="1"/>
</dbReference>
<dbReference type="Gene3D" id="3.40.50.720">
    <property type="entry name" value="NAD(P)-binding Rossmann-like Domain"/>
    <property type="match status" value="1"/>
</dbReference>
<dbReference type="InterPro" id="IPR036291">
    <property type="entry name" value="NAD(P)-bd_dom_sf"/>
</dbReference>
<dbReference type="InterPro" id="IPR002347">
    <property type="entry name" value="SDR_fam"/>
</dbReference>
<dbReference type="PANTHER" id="PTHR43157">
    <property type="entry name" value="PHOSPHATIDYLINOSITOL-GLYCAN BIOSYNTHESIS CLASS F PROTEIN-RELATED"/>
    <property type="match status" value="1"/>
</dbReference>
<dbReference type="PANTHER" id="PTHR43157:SF72">
    <property type="entry name" value="RETINOL DEHYDROGENASE 14"/>
    <property type="match status" value="1"/>
</dbReference>
<dbReference type="Pfam" id="PF00106">
    <property type="entry name" value="adh_short"/>
    <property type="match status" value="1"/>
</dbReference>
<dbReference type="PRINTS" id="PR00081">
    <property type="entry name" value="GDHRDH"/>
</dbReference>
<dbReference type="PRINTS" id="PR00080">
    <property type="entry name" value="SDRFAMILY"/>
</dbReference>
<dbReference type="SUPFAM" id="SSF51735">
    <property type="entry name" value="NAD(P)-binding Rossmann-fold domains"/>
    <property type="match status" value="1"/>
</dbReference>
<name>RDH14_HUMAN</name>
<protein>
    <recommendedName>
        <fullName evidence="6">Retinol dehydrogenase 14</fullName>
        <ecNumber evidence="4">1.1.1.300</ecNumber>
    </recommendedName>
    <alternativeName>
        <fullName evidence="5">Alcohol dehydrogenase PAN2</fullName>
    </alternativeName>
    <alternativeName>
        <fullName>Short chain dehydrogenase/reductase family 7C member 4</fullName>
    </alternativeName>
</protein>
<reference key="1">
    <citation type="submission" date="2000-02" db="EMBL/GenBank/DDBJ databases">
        <title>Pan2, a novel member of the SCAD superfamily.</title>
        <authorList>
            <person name="Brereton P.S."/>
            <person name="Li K.X."/>
            <person name="Krozowski Z.S."/>
        </authorList>
    </citation>
    <scope>NUCLEOTIDE SEQUENCE [MRNA]</scope>
    <source>
        <tissue>Lung</tissue>
    </source>
</reference>
<reference key="2">
    <citation type="journal article" date="2003" name="Genome Res.">
        <title>The secreted protein discovery initiative (SPDI), a large-scale effort to identify novel human secreted and transmembrane proteins: a bioinformatics assessment.</title>
        <authorList>
            <person name="Clark H.F."/>
            <person name="Gurney A.L."/>
            <person name="Abaya E."/>
            <person name="Baker K."/>
            <person name="Baldwin D.T."/>
            <person name="Brush J."/>
            <person name="Chen J."/>
            <person name="Chow B."/>
            <person name="Chui C."/>
            <person name="Crowley C."/>
            <person name="Currell B."/>
            <person name="Deuel B."/>
            <person name="Dowd P."/>
            <person name="Eaton D."/>
            <person name="Foster J.S."/>
            <person name="Grimaldi C."/>
            <person name="Gu Q."/>
            <person name="Hass P.E."/>
            <person name="Heldens S."/>
            <person name="Huang A."/>
            <person name="Kim H.S."/>
            <person name="Klimowski L."/>
            <person name="Jin Y."/>
            <person name="Johnson S."/>
            <person name="Lee J."/>
            <person name="Lewis L."/>
            <person name="Liao D."/>
            <person name="Mark M.R."/>
            <person name="Robbie E."/>
            <person name="Sanchez C."/>
            <person name="Schoenfeld J."/>
            <person name="Seshagiri S."/>
            <person name="Simmons L."/>
            <person name="Singh J."/>
            <person name="Smith V."/>
            <person name="Stinson J."/>
            <person name="Vagts A."/>
            <person name="Vandlen R.L."/>
            <person name="Watanabe C."/>
            <person name="Wieand D."/>
            <person name="Woods K."/>
            <person name="Xie M.-H."/>
            <person name="Yansura D.G."/>
            <person name="Yi S."/>
            <person name="Yu G."/>
            <person name="Yuan J."/>
            <person name="Zhang M."/>
            <person name="Zhang Z."/>
            <person name="Goddard A.D."/>
            <person name="Wood W.I."/>
            <person name="Godowski P.J."/>
            <person name="Gray A.M."/>
        </authorList>
    </citation>
    <scope>NUCLEOTIDE SEQUENCE [LARGE SCALE MRNA]</scope>
</reference>
<reference key="3">
    <citation type="journal article" date="2004" name="Genome Res.">
        <title>The status, quality, and expansion of the NIH full-length cDNA project: the Mammalian Gene Collection (MGC).</title>
        <authorList>
            <consortium name="The MGC Project Team"/>
        </authorList>
    </citation>
    <scope>NUCLEOTIDE SEQUENCE [LARGE SCALE MRNA]</scope>
    <source>
        <tissue>B-cell</tissue>
    </source>
</reference>
<reference key="4">
    <citation type="journal article" date="2002" name="FEBS Lett.">
        <title>Human pancreas protein 2 (PAN2) has a retinal reductase activity and is ubiquitously expressed in human tissues.</title>
        <authorList>
            <person name="Belyaeva O.V."/>
            <person name="Kedishvili N.Y."/>
        </authorList>
    </citation>
    <scope>CATALYTIC ACTIVITY</scope>
    <scope>BIOPHYSICOCHEMICAL PROPERTIES</scope>
    <scope>TISSUE SPECIFICITY</scope>
    <scope>FUNCTION</scope>
    <scope>SUBSTRATE SPECIFICITY</scope>
</reference>
<reference key="5">
    <citation type="journal article" date="2010" name="Sci. Signal.">
        <title>Quantitative phosphoproteomics reveals widespread full phosphorylation site occupancy during mitosis.</title>
        <authorList>
            <person name="Olsen J.V."/>
            <person name="Vermeulen M."/>
            <person name="Santamaria A."/>
            <person name="Kumar C."/>
            <person name="Miller M.L."/>
            <person name="Jensen L.J."/>
            <person name="Gnad F."/>
            <person name="Cox J."/>
            <person name="Jensen T.S."/>
            <person name="Nigg E.A."/>
            <person name="Brunak S."/>
            <person name="Mann M."/>
        </authorList>
    </citation>
    <scope>PHOSPHORYLATION [LARGE SCALE ANALYSIS] AT THR-5</scope>
    <scope>IDENTIFICATION BY MASS SPECTROMETRY [LARGE SCALE ANALYSIS]</scope>
    <source>
        <tissue>Cervix carcinoma</tissue>
    </source>
</reference>
<reference key="6">
    <citation type="journal article" date="2011" name="BMC Syst. Biol.">
        <title>Initial characterization of the human central proteome.</title>
        <authorList>
            <person name="Burkard T.R."/>
            <person name="Planyavsky M."/>
            <person name="Kaupe I."/>
            <person name="Breitwieser F.P."/>
            <person name="Buerckstuemmer T."/>
            <person name="Bennett K.L."/>
            <person name="Superti-Furga G."/>
            <person name="Colinge J."/>
        </authorList>
    </citation>
    <scope>IDENTIFICATION BY MASS SPECTROMETRY [LARGE SCALE ANALYSIS]</scope>
</reference>
<reference key="7">
    <citation type="journal article" date="2015" name="Proteomics">
        <title>N-terminome analysis of the human mitochondrial proteome.</title>
        <authorList>
            <person name="Vaca Jacome A.S."/>
            <person name="Rabilloud T."/>
            <person name="Schaeffer-Reiss C."/>
            <person name="Rompais M."/>
            <person name="Ayoub D."/>
            <person name="Lane L."/>
            <person name="Bairoch A."/>
            <person name="Van Dorsselaer A."/>
            <person name="Carapito C."/>
        </authorList>
    </citation>
    <scope>IDENTIFICATION BY MASS SPECTROMETRY [LARGE SCALE ANALYSIS]</scope>
</reference>
<feature type="chain" id="PRO_0000054770" description="Retinol dehydrogenase 14">
    <location>
        <begin position="1"/>
        <end position="336"/>
    </location>
</feature>
<feature type="active site" description="Proton acceptor" evidence="2">
    <location>
        <position position="217"/>
    </location>
</feature>
<feature type="binding site" evidence="1">
    <location>
        <begin position="50"/>
        <end position="56"/>
    </location>
    <ligand>
        <name>NADP(+)</name>
        <dbReference type="ChEBI" id="CHEBI:58349"/>
    </ligand>
</feature>
<feature type="binding site" evidence="1">
    <location>
        <position position="192"/>
    </location>
    <ligand>
        <name>substrate</name>
    </ligand>
</feature>
<feature type="modified residue" description="Phosphothreonine" evidence="7">
    <location>
        <position position="5"/>
    </location>
</feature>
<accession>Q9HBH5</accession>
<evidence type="ECO:0000250" key="1"/>
<evidence type="ECO:0000250" key="2">
    <source>
        <dbReference type="UniProtKB" id="Q8WNV7"/>
    </source>
</evidence>
<evidence type="ECO:0000250" key="3">
    <source>
        <dbReference type="UniProtKB" id="Q9ERI6"/>
    </source>
</evidence>
<evidence type="ECO:0000269" key="4">
    <source>
    </source>
</evidence>
<evidence type="ECO:0000303" key="5">
    <source>
    </source>
</evidence>
<evidence type="ECO:0000305" key="6"/>
<evidence type="ECO:0007744" key="7">
    <source>
    </source>
</evidence>
<comment type="function">
    <text evidence="4">Retinol dehydrogenase with a clear preference for NADP. Displays high activity towards 9-cis, 11-cis and all-trans-retinol. Shows a very weak activity towards 13-cis-retinol. Has no activity towards steroid.</text>
</comment>
<comment type="catalytic activity">
    <reaction evidence="4">
        <text>all-trans-retinol + NADP(+) = all-trans-retinal + NADPH + H(+)</text>
        <dbReference type="Rhea" id="RHEA:25033"/>
        <dbReference type="ChEBI" id="CHEBI:15378"/>
        <dbReference type="ChEBI" id="CHEBI:17336"/>
        <dbReference type="ChEBI" id="CHEBI:17898"/>
        <dbReference type="ChEBI" id="CHEBI:57783"/>
        <dbReference type="ChEBI" id="CHEBI:58349"/>
        <dbReference type="EC" id="1.1.1.300"/>
    </reaction>
</comment>
<comment type="catalytic activity">
    <reaction evidence="4">
        <text>9-cis-retinol + NADP(+) = 9-cis-retinal + NADPH + H(+)</text>
        <dbReference type="Rhea" id="RHEA:54916"/>
        <dbReference type="ChEBI" id="CHEBI:15378"/>
        <dbReference type="ChEBI" id="CHEBI:57783"/>
        <dbReference type="ChEBI" id="CHEBI:58349"/>
        <dbReference type="ChEBI" id="CHEBI:78272"/>
        <dbReference type="ChEBI" id="CHEBI:78273"/>
    </reaction>
</comment>
<comment type="catalytic activity">
    <reaction evidence="3">
        <text>11-cis-retinol + NADP(+) = 11-cis-retinal + NADPH + H(+)</text>
        <dbReference type="Rhea" id="RHEA:54912"/>
        <dbReference type="ChEBI" id="CHEBI:15378"/>
        <dbReference type="ChEBI" id="CHEBI:16066"/>
        <dbReference type="ChEBI" id="CHEBI:16302"/>
        <dbReference type="ChEBI" id="CHEBI:57783"/>
        <dbReference type="ChEBI" id="CHEBI:58349"/>
    </reaction>
</comment>
<comment type="biophysicochemical properties">
    <kinetics>
        <KM evidence="4">0.32 uM for NADPH</KM>
        <KM evidence="4">0.65 uM for NADP</KM>
        <KM evidence="4">0.08 uM for all-trans-retinal</KM>
        <KM evidence="4">0.4 uM for all-trans-retinol</KM>
        <KM evidence="4">1060 uM for NADH</KM>
        <Vmax evidence="4">27.0 nmol/min/mg enzyme with all-trans-retinal as substrate</Vmax>
        <Vmax evidence="4">31.0 nmol/min/mg enzyme with all-trans-retinol as substrate</Vmax>
        <text evidence="4">Vmax is measured per mg microsomal protein.</text>
    </kinetics>
</comment>
<comment type="pathway">
    <text evidence="4">Cofactor metabolism; retinol metabolism.</text>
</comment>
<comment type="interaction">
    <interactant intactId="EBI-11722320">
        <id>Q9HBH5</id>
    </interactant>
    <interactant intactId="EBI-2214155">
        <id>P50579</id>
        <label>METAP2</label>
    </interactant>
    <organismsDiffer>false</organismsDiffer>
    <experiments>3</experiments>
</comment>
<comment type="tissue specificity">
    <text evidence="4">Widely expressed.</text>
</comment>
<comment type="miscellaneous">
    <text evidence="3">Shows clear specificity for the pro-S hydrogen on C4 of NADPH and the pro-R hydrogen on C15 of retinols.</text>
</comment>
<comment type="similarity">
    <text evidence="6">Belongs to the short-chain dehydrogenases/reductases (SDR) family.</text>
</comment>
<keyword id="KW-0443">Lipid metabolism</keyword>
<keyword id="KW-0521">NADP</keyword>
<keyword id="KW-0560">Oxidoreductase</keyword>
<keyword id="KW-0597">Phosphoprotein</keyword>
<keyword id="KW-1267">Proteomics identification</keyword>
<keyword id="KW-1185">Reference proteome</keyword>